<accession>P20552</accession>
<proteinExistence type="predicted"/>
<organismHost>
    <name type="scientific">Homo sapiens</name>
    <name type="common">Human</name>
    <dbReference type="NCBI Taxonomy" id="9606"/>
</organismHost>
<gene>
    <name type="ORF">D ORF C</name>
</gene>
<sequence length="69" mass="7348">MKILTIEYASSSLRLSNSVHSGLLSIYLFNSSHLNASTNLGSSFCLHADGTPIVLRTKITSLPLIAASI</sequence>
<name>YVDC_VACCC</name>
<keyword id="KW-1185">Reference proteome</keyword>
<dbReference type="EMBL" id="M35027">
    <property type="protein sequence ID" value="AAA48101.1"/>
    <property type="molecule type" value="Genomic_DNA"/>
</dbReference>
<dbReference type="PIR" id="F42516">
    <property type="entry name" value="F42516"/>
</dbReference>
<dbReference type="Proteomes" id="UP000008269">
    <property type="component" value="Segment"/>
</dbReference>
<organism>
    <name type="scientific">Vaccinia virus (strain Copenhagen)</name>
    <name type="common">VACV</name>
    <dbReference type="NCBI Taxonomy" id="10249"/>
    <lineage>
        <taxon>Viruses</taxon>
        <taxon>Varidnaviria</taxon>
        <taxon>Bamfordvirae</taxon>
        <taxon>Nucleocytoviricota</taxon>
        <taxon>Pokkesviricetes</taxon>
        <taxon>Chitovirales</taxon>
        <taxon>Poxviridae</taxon>
        <taxon>Chordopoxvirinae</taxon>
        <taxon>Orthopoxvirus</taxon>
        <taxon>Vaccinia virus</taxon>
    </lineage>
</organism>
<reference key="1">
    <citation type="journal article" date="1990" name="Virology">
        <title>The complete DNA sequence of vaccinia virus.</title>
        <authorList>
            <person name="Goebel S.J."/>
            <person name="Johnson G.P."/>
            <person name="Perkus M.E."/>
            <person name="Davis S.W."/>
            <person name="Winslow J.P."/>
            <person name="Paoletti E."/>
        </authorList>
    </citation>
    <scope>NUCLEOTIDE SEQUENCE [LARGE SCALE GENOMIC DNA]</scope>
</reference>
<reference key="2">
    <citation type="journal article" date="1990" name="Virology">
        <title>Appendix to 'The complete DNA sequence of vaccinia virus'.</title>
        <authorList>
            <person name="Goebel S.J."/>
            <person name="Johnson G.P."/>
            <person name="Perkus M.E."/>
            <person name="Davis S.W."/>
            <person name="Winslow J.P."/>
            <person name="Paoletti E."/>
        </authorList>
    </citation>
    <scope>COMPLETE GENOME</scope>
</reference>
<protein>
    <recommendedName>
        <fullName>Uncharacterized 7.3 kDa protein</fullName>
    </recommendedName>
</protein>
<feature type="chain" id="PRO_0000099688" description="Uncharacterized 7.3 kDa protein">
    <location>
        <begin position="1"/>
        <end position="69"/>
    </location>
</feature>